<sequence length="110" mass="12212">MSDRPLCDAVVILCTAPDDACAQRLANSLLETRLAACVTLLPGARSLYYWEGKLEQQSEVQMLIKSDTSHQQALLTHLKQQHPYDTPELLVLPVSGGDSDYLTWLNASLR</sequence>
<feature type="chain" id="PRO_0000157121" description="Divalent-cation tolerance protein CutA">
    <location>
        <begin position="1"/>
        <end position="110"/>
    </location>
</feature>
<feature type="binding site" evidence="1">
    <location>
        <position position="14"/>
    </location>
    <ligand>
        <name>Cu cation</name>
        <dbReference type="ChEBI" id="CHEBI:23378"/>
    </ligand>
</feature>
<feature type="binding site" evidence="1">
    <location>
        <position position="82"/>
    </location>
    <ligand>
        <name>Cu cation</name>
        <dbReference type="ChEBI" id="CHEBI:23378"/>
    </ligand>
</feature>
<protein>
    <recommendedName>
        <fullName>Divalent-cation tolerance protein CutA</fullName>
    </recommendedName>
</protein>
<proteinExistence type="inferred from homology"/>
<dbReference type="EMBL" id="BX950851">
    <property type="protein sequence ID" value="CAG73535.1"/>
    <property type="status" value="ALT_INIT"/>
    <property type="molecule type" value="Genomic_DNA"/>
</dbReference>
<dbReference type="RefSeq" id="WP_014914061.1">
    <property type="nucleotide sequence ID" value="NC_004547.2"/>
</dbReference>
<dbReference type="SMR" id="Q6D9J5"/>
<dbReference type="STRING" id="218491.ECA0619"/>
<dbReference type="GeneID" id="61410870"/>
<dbReference type="KEGG" id="eca:ECA0619"/>
<dbReference type="eggNOG" id="COG1324">
    <property type="taxonomic scope" value="Bacteria"/>
</dbReference>
<dbReference type="HOGENOM" id="CLU_098807_3_1_6"/>
<dbReference type="OrthoDB" id="37622at2"/>
<dbReference type="Proteomes" id="UP000007966">
    <property type="component" value="Chromosome"/>
</dbReference>
<dbReference type="GO" id="GO:0005737">
    <property type="term" value="C:cytoplasm"/>
    <property type="evidence" value="ECO:0007669"/>
    <property type="project" value="UniProtKB-SubCell"/>
</dbReference>
<dbReference type="GO" id="GO:0005507">
    <property type="term" value="F:copper ion binding"/>
    <property type="evidence" value="ECO:0007669"/>
    <property type="project" value="InterPro"/>
</dbReference>
<dbReference type="GO" id="GO:0010038">
    <property type="term" value="P:response to metal ion"/>
    <property type="evidence" value="ECO:0007669"/>
    <property type="project" value="InterPro"/>
</dbReference>
<dbReference type="Gene3D" id="3.30.70.120">
    <property type="match status" value="1"/>
</dbReference>
<dbReference type="HAMAP" id="MF_01160">
    <property type="entry name" value="CutA"/>
    <property type="match status" value="1"/>
</dbReference>
<dbReference type="InterPro" id="IPR023700">
    <property type="entry name" value="CutA_Enterobact"/>
</dbReference>
<dbReference type="InterPro" id="IPR004323">
    <property type="entry name" value="Ion_tolerance_CutA"/>
</dbReference>
<dbReference type="InterPro" id="IPR011322">
    <property type="entry name" value="N-reg_PII-like_a/b"/>
</dbReference>
<dbReference type="InterPro" id="IPR015867">
    <property type="entry name" value="N-reg_PII/ATP_PRibTrfase_C"/>
</dbReference>
<dbReference type="NCBIfam" id="NF007930">
    <property type="entry name" value="PRK10645.1"/>
    <property type="match status" value="1"/>
</dbReference>
<dbReference type="PANTHER" id="PTHR23419">
    <property type="entry name" value="DIVALENT CATION TOLERANCE CUTA-RELATED"/>
    <property type="match status" value="1"/>
</dbReference>
<dbReference type="PANTHER" id="PTHR23419:SF8">
    <property type="entry name" value="FI09726P"/>
    <property type="match status" value="1"/>
</dbReference>
<dbReference type="Pfam" id="PF03091">
    <property type="entry name" value="CutA1"/>
    <property type="match status" value="1"/>
</dbReference>
<dbReference type="SUPFAM" id="SSF54913">
    <property type="entry name" value="GlnB-like"/>
    <property type="match status" value="1"/>
</dbReference>
<organism>
    <name type="scientific">Pectobacterium atrosepticum (strain SCRI 1043 / ATCC BAA-672)</name>
    <name type="common">Erwinia carotovora subsp. atroseptica</name>
    <dbReference type="NCBI Taxonomy" id="218491"/>
    <lineage>
        <taxon>Bacteria</taxon>
        <taxon>Pseudomonadati</taxon>
        <taxon>Pseudomonadota</taxon>
        <taxon>Gammaproteobacteria</taxon>
        <taxon>Enterobacterales</taxon>
        <taxon>Pectobacteriaceae</taxon>
        <taxon>Pectobacterium</taxon>
    </lineage>
</organism>
<keyword id="KW-0186">Copper</keyword>
<keyword id="KW-0963">Cytoplasm</keyword>
<keyword id="KW-0479">Metal-binding</keyword>
<keyword id="KW-1185">Reference proteome</keyword>
<comment type="function">
    <text evidence="1">Involved in resistance toward heavy metals.</text>
</comment>
<comment type="cofactor">
    <cofactor evidence="1">
        <name>Cu cation</name>
        <dbReference type="ChEBI" id="CHEBI:23378"/>
    </cofactor>
    <text evidence="1">Binds 1 copper ion per subunit.</text>
</comment>
<comment type="subunit">
    <text evidence="1">Homotrimer.</text>
</comment>
<comment type="subcellular location">
    <subcellularLocation>
        <location evidence="1">Cytoplasm</location>
    </subcellularLocation>
</comment>
<comment type="similarity">
    <text evidence="2">Belongs to the CutA family.</text>
</comment>
<comment type="caution">
    <text evidence="2">Gln-81 is present instead of the conserved His which is expected to be a metal-binding residue.</text>
</comment>
<comment type="sequence caution" evidence="2">
    <conflict type="erroneous initiation">
        <sequence resource="EMBL-CDS" id="CAG73535"/>
    </conflict>
</comment>
<reference key="1">
    <citation type="journal article" date="2004" name="Proc. Natl. Acad. Sci. U.S.A.">
        <title>Genome sequence of the enterobacterial phytopathogen Erwinia carotovora subsp. atroseptica and characterization of virulence factors.</title>
        <authorList>
            <person name="Bell K.S."/>
            <person name="Sebaihia M."/>
            <person name="Pritchard L."/>
            <person name="Holden M.T.G."/>
            <person name="Hyman L.J."/>
            <person name="Holeva M.C."/>
            <person name="Thomson N.R."/>
            <person name="Bentley S.D."/>
            <person name="Churcher L.J.C."/>
            <person name="Mungall K."/>
            <person name="Atkin R."/>
            <person name="Bason N."/>
            <person name="Brooks K."/>
            <person name="Chillingworth T."/>
            <person name="Clark K."/>
            <person name="Doggett J."/>
            <person name="Fraser A."/>
            <person name="Hance Z."/>
            <person name="Hauser H."/>
            <person name="Jagels K."/>
            <person name="Moule S."/>
            <person name="Norbertczak H."/>
            <person name="Ormond D."/>
            <person name="Price C."/>
            <person name="Quail M.A."/>
            <person name="Sanders M."/>
            <person name="Walker D."/>
            <person name="Whitehead S."/>
            <person name="Salmond G.P.C."/>
            <person name="Birch P.R.J."/>
            <person name="Parkhill J."/>
            <person name="Toth I.K."/>
        </authorList>
    </citation>
    <scope>NUCLEOTIDE SEQUENCE [LARGE SCALE GENOMIC DNA]</scope>
    <source>
        <strain>SCRI 1043 / ATCC BAA-672</strain>
    </source>
</reference>
<name>CUTA_PECAS</name>
<gene>
    <name type="primary">cutA</name>
    <name type="ordered locus">ECA0619</name>
</gene>
<evidence type="ECO:0000250" key="1"/>
<evidence type="ECO:0000305" key="2"/>
<accession>Q6D9J5</accession>